<feature type="chain" id="PRO_0000130174" description="Small ribosomal subunit protein uS3">
    <location>
        <begin position="1"/>
        <end position="269"/>
    </location>
</feature>
<feature type="domain" description="KH type-2" evidence="1">
    <location>
        <begin position="38"/>
        <end position="106"/>
    </location>
</feature>
<feature type="region of interest" description="Disordered" evidence="2">
    <location>
        <begin position="215"/>
        <end position="269"/>
    </location>
</feature>
<feature type="compositionally biased region" description="Basic and acidic residues" evidence="2">
    <location>
        <begin position="236"/>
        <end position="252"/>
    </location>
</feature>
<feature type="compositionally biased region" description="Polar residues" evidence="2">
    <location>
        <begin position="256"/>
        <end position="269"/>
    </location>
</feature>
<feature type="helix" evidence="4">
    <location>
        <begin position="7"/>
        <end position="10"/>
    </location>
</feature>
<feature type="turn" evidence="4">
    <location>
        <begin position="13"/>
        <end position="15"/>
    </location>
</feature>
<feature type="strand" evidence="4">
    <location>
        <begin position="19"/>
        <end position="21"/>
    </location>
</feature>
<feature type="strand" evidence="4">
    <location>
        <begin position="25"/>
        <end position="27"/>
    </location>
</feature>
<feature type="helix" evidence="4">
    <location>
        <begin position="28"/>
        <end position="45"/>
    </location>
</feature>
<feature type="turn" evidence="4">
    <location>
        <begin position="47"/>
        <end position="49"/>
    </location>
</feature>
<feature type="strand" evidence="4">
    <location>
        <begin position="51"/>
        <end position="70"/>
    </location>
</feature>
<feature type="helix" evidence="4">
    <location>
        <begin position="73"/>
        <end position="76"/>
    </location>
</feature>
<feature type="helix" evidence="4">
    <location>
        <begin position="81"/>
        <end position="94"/>
    </location>
</feature>
<feature type="strand" evidence="4">
    <location>
        <begin position="96"/>
        <end position="103"/>
    </location>
</feature>
<feature type="turn" evidence="4">
    <location>
        <begin position="108"/>
        <end position="110"/>
    </location>
</feature>
<feature type="helix" evidence="4">
    <location>
        <begin position="112"/>
        <end position="124"/>
    </location>
</feature>
<feature type="helix" evidence="4">
    <location>
        <begin position="129"/>
        <end position="143"/>
    </location>
</feature>
<feature type="strand" evidence="4">
    <location>
        <begin position="146"/>
        <end position="155"/>
    </location>
</feature>
<feature type="helix" evidence="4">
    <location>
        <begin position="156"/>
        <end position="158"/>
    </location>
</feature>
<feature type="strand" evidence="4">
    <location>
        <begin position="163"/>
        <end position="170"/>
    </location>
</feature>
<feature type="strand" evidence="4">
    <location>
        <begin position="177"/>
        <end position="189"/>
    </location>
</feature>
<feature type="strand" evidence="4">
    <location>
        <begin position="191"/>
        <end position="205"/>
    </location>
</feature>
<feature type="helix" evidence="4">
    <location>
        <begin position="209"/>
        <end position="214"/>
    </location>
</feature>
<proteinExistence type="evidence at protein level"/>
<name>RS3_CUTAK</name>
<gene>
    <name evidence="1" type="primary">rpsC</name>
    <name type="ordered locus">PPA1857</name>
</gene>
<reference key="1">
    <citation type="journal article" date="2004" name="Science">
        <title>The complete genome sequence of Propionibacterium acnes, a commensal of human skin.</title>
        <authorList>
            <person name="Brueggemann H."/>
            <person name="Henne A."/>
            <person name="Hoster F."/>
            <person name="Liesegang H."/>
            <person name="Wiezer A."/>
            <person name="Strittmatter A."/>
            <person name="Hujer S."/>
            <person name="Duerre P."/>
            <person name="Gottschalk G."/>
        </authorList>
    </citation>
    <scope>NUCLEOTIDE SEQUENCE [LARGE SCALE GENOMIC DNA]</scope>
    <source>
        <strain>DSM 16379 / KPA171202</strain>
    </source>
</reference>
<sequence length="269" mass="29674">MGQKINPHGFRLGVTTDHKTRWYAEKQYAELVGEDVKIREWLHKNLERAGLSSIEIERRSERVTIFLYAARPGIVIGRNGAEAERVRGELEKLTGKQIQLNILEVKSPETDAQLVAQGIAEQLAARVAFRRAMRKAQQSAMNAGALGIRIKCSGRLGGAEMSRSEGYREGRVPLHTLRADIDYGFFEARTTFGRIGVKVWIYKGDVTGTRAERAAQKAARQAAQGGRGGRGGNRRGRGDRPDRRGGRRRAEAAKQSAETPAPQTENAGA</sequence>
<comment type="function">
    <text evidence="1">Binds the lower part of the 30S subunit head. Binds mRNA in the 70S ribosome, positioning it for translation.</text>
</comment>
<comment type="subunit">
    <text evidence="1">Part of the 30S ribosomal subunit. Forms a tight complex with proteins S10 and S14.</text>
</comment>
<comment type="similarity">
    <text evidence="1">Belongs to the universal ribosomal protein uS3 family.</text>
</comment>
<accession>Q6A6N2</accession>
<protein>
    <recommendedName>
        <fullName evidence="1">Small ribosomal subunit protein uS3</fullName>
    </recommendedName>
    <alternativeName>
        <fullName evidence="3">30S ribosomal protein S3</fullName>
    </alternativeName>
</protein>
<keyword id="KW-0002">3D-structure</keyword>
<keyword id="KW-0687">Ribonucleoprotein</keyword>
<keyword id="KW-0689">Ribosomal protein</keyword>
<keyword id="KW-0694">RNA-binding</keyword>
<keyword id="KW-0699">rRNA-binding</keyword>
<dbReference type="EMBL" id="AE017283">
    <property type="protein sequence ID" value="AAT83581.1"/>
    <property type="molecule type" value="Genomic_DNA"/>
</dbReference>
<dbReference type="RefSeq" id="WP_002515984.1">
    <property type="nucleotide sequence ID" value="NZ_CP025935.1"/>
</dbReference>
<dbReference type="PDB" id="8CRX">
    <property type="method" value="EM"/>
    <property type="resolution" value="2.78 A"/>
    <property type="chains" value="G=1-269"/>
</dbReference>
<dbReference type="PDB" id="8CVO">
    <property type="method" value="EM"/>
    <property type="resolution" value="2.95 A"/>
    <property type="chains" value="G=1-269"/>
</dbReference>
<dbReference type="PDBsum" id="8CRX"/>
<dbReference type="PDBsum" id="8CVO"/>
<dbReference type="SMR" id="Q6A6N2"/>
<dbReference type="EnsemblBacteria" id="AAT83581">
    <property type="protein sequence ID" value="AAT83581"/>
    <property type="gene ID" value="PPA1857"/>
</dbReference>
<dbReference type="GeneID" id="92857804"/>
<dbReference type="KEGG" id="pac:PPA1857"/>
<dbReference type="eggNOG" id="COG0092">
    <property type="taxonomic scope" value="Bacteria"/>
</dbReference>
<dbReference type="HOGENOM" id="CLU_058591_0_0_11"/>
<dbReference type="Proteomes" id="UP000000603">
    <property type="component" value="Chromosome"/>
</dbReference>
<dbReference type="GO" id="GO:0022627">
    <property type="term" value="C:cytosolic small ribosomal subunit"/>
    <property type="evidence" value="ECO:0007669"/>
    <property type="project" value="TreeGrafter"/>
</dbReference>
<dbReference type="GO" id="GO:0003729">
    <property type="term" value="F:mRNA binding"/>
    <property type="evidence" value="ECO:0007669"/>
    <property type="project" value="UniProtKB-UniRule"/>
</dbReference>
<dbReference type="GO" id="GO:0019843">
    <property type="term" value="F:rRNA binding"/>
    <property type="evidence" value="ECO:0007669"/>
    <property type="project" value="UniProtKB-UniRule"/>
</dbReference>
<dbReference type="GO" id="GO:0003735">
    <property type="term" value="F:structural constituent of ribosome"/>
    <property type="evidence" value="ECO:0007669"/>
    <property type="project" value="InterPro"/>
</dbReference>
<dbReference type="GO" id="GO:0006412">
    <property type="term" value="P:translation"/>
    <property type="evidence" value="ECO:0007669"/>
    <property type="project" value="UniProtKB-UniRule"/>
</dbReference>
<dbReference type="CDD" id="cd02412">
    <property type="entry name" value="KH-II_30S_S3"/>
    <property type="match status" value="1"/>
</dbReference>
<dbReference type="FunFam" id="3.30.1140.32:FF:000002">
    <property type="entry name" value="30S ribosomal protein S3"/>
    <property type="match status" value="1"/>
</dbReference>
<dbReference type="FunFam" id="3.30.300.20:FF:000001">
    <property type="entry name" value="30S ribosomal protein S3"/>
    <property type="match status" value="1"/>
</dbReference>
<dbReference type="Gene3D" id="3.30.300.20">
    <property type="match status" value="1"/>
</dbReference>
<dbReference type="Gene3D" id="3.30.1140.32">
    <property type="entry name" value="Ribosomal protein S3, C-terminal domain"/>
    <property type="match status" value="1"/>
</dbReference>
<dbReference type="HAMAP" id="MF_01309_B">
    <property type="entry name" value="Ribosomal_uS3_B"/>
    <property type="match status" value="1"/>
</dbReference>
<dbReference type="InterPro" id="IPR004087">
    <property type="entry name" value="KH_dom"/>
</dbReference>
<dbReference type="InterPro" id="IPR015946">
    <property type="entry name" value="KH_dom-like_a/b"/>
</dbReference>
<dbReference type="InterPro" id="IPR004044">
    <property type="entry name" value="KH_dom_type_2"/>
</dbReference>
<dbReference type="InterPro" id="IPR009019">
    <property type="entry name" value="KH_sf_prok-type"/>
</dbReference>
<dbReference type="InterPro" id="IPR036419">
    <property type="entry name" value="Ribosomal_S3_C_sf"/>
</dbReference>
<dbReference type="InterPro" id="IPR005704">
    <property type="entry name" value="Ribosomal_uS3_bac-typ"/>
</dbReference>
<dbReference type="InterPro" id="IPR001351">
    <property type="entry name" value="Ribosomal_uS3_C"/>
</dbReference>
<dbReference type="InterPro" id="IPR018280">
    <property type="entry name" value="Ribosomal_uS3_CS"/>
</dbReference>
<dbReference type="NCBIfam" id="TIGR01009">
    <property type="entry name" value="rpsC_bact"/>
    <property type="match status" value="1"/>
</dbReference>
<dbReference type="PANTHER" id="PTHR11760">
    <property type="entry name" value="30S/40S RIBOSOMAL PROTEIN S3"/>
    <property type="match status" value="1"/>
</dbReference>
<dbReference type="PANTHER" id="PTHR11760:SF19">
    <property type="entry name" value="SMALL RIBOSOMAL SUBUNIT PROTEIN US3C"/>
    <property type="match status" value="1"/>
</dbReference>
<dbReference type="Pfam" id="PF07650">
    <property type="entry name" value="KH_2"/>
    <property type="match status" value="1"/>
</dbReference>
<dbReference type="Pfam" id="PF00189">
    <property type="entry name" value="Ribosomal_S3_C"/>
    <property type="match status" value="1"/>
</dbReference>
<dbReference type="SMART" id="SM00322">
    <property type="entry name" value="KH"/>
    <property type="match status" value="1"/>
</dbReference>
<dbReference type="SUPFAM" id="SSF54814">
    <property type="entry name" value="Prokaryotic type KH domain (KH-domain type II)"/>
    <property type="match status" value="1"/>
</dbReference>
<dbReference type="SUPFAM" id="SSF54821">
    <property type="entry name" value="Ribosomal protein S3 C-terminal domain"/>
    <property type="match status" value="1"/>
</dbReference>
<dbReference type="PROSITE" id="PS50823">
    <property type="entry name" value="KH_TYPE_2"/>
    <property type="match status" value="1"/>
</dbReference>
<dbReference type="PROSITE" id="PS00548">
    <property type="entry name" value="RIBOSOMAL_S3"/>
    <property type="match status" value="1"/>
</dbReference>
<organism>
    <name type="scientific">Cutibacterium acnes (strain DSM 16379 / KPA171202)</name>
    <name type="common">Propionibacterium acnes</name>
    <dbReference type="NCBI Taxonomy" id="267747"/>
    <lineage>
        <taxon>Bacteria</taxon>
        <taxon>Bacillati</taxon>
        <taxon>Actinomycetota</taxon>
        <taxon>Actinomycetes</taxon>
        <taxon>Propionibacteriales</taxon>
        <taxon>Propionibacteriaceae</taxon>
        <taxon>Cutibacterium</taxon>
    </lineage>
</organism>
<evidence type="ECO:0000255" key="1">
    <source>
        <dbReference type="HAMAP-Rule" id="MF_01309"/>
    </source>
</evidence>
<evidence type="ECO:0000256" key="2">
    <source>
        <dbReference type="SAM" id="MobiDB-lite"/>
    </source>
</evidence>
<evidence type="ECO:0000305" key="3"/>
<evidence type="ECO:0007829" key="4">
    <source>
        <dbReference type="PDB" id="8CVO"/>
    </source>
</evidence>